<dbReference type="EMBL" id="AE000782">
    <property type="protein sequence ID" value="AAB90736.1"/>
    <property type="molecule type" value="Genomic_DNA"/>
</dbReference>
<dbReference type="PIR" id="E69312">
    <property type="entry name" value="E69312"/>
</dbReference>
<dbReference type="STRING" id="224325.AF_0501"/>
<dbReference type="PaxDb" id="224325-AF_0501"/>
<dbReference type="EnsemblBacteria" id="AAB90736">
    <property type="protein sequence ID" value="AAB90736"/>
    <property type="gene ID" value="AF_0501"/>
</dbReference>
<dbReference type="KEGG" id="afu:AF_0501"/>
<dbReference type="eggNOG" id="arCOG02194">
    <property type="taxonomic scope" value="Archaea"/>
</dbReference>
<dbReference type="HOGENOM" id="CLU_067516_0_0_2"/>
<dbReference type="OrthoDB" id="50403at2157"/>
<dbReference type="PhylomeDB" id="O29749"/>
<dbReference type="Proteomes" id="UP000002199">
    <property type="component" value="Chromosome"/>
</dbReference>
<dbReference type="GO" id="GO:0005886">
    <property type="term" value="C:plasma membrane"/>
    <property type="evidence" value="ECO:0007669"/>
    <property type="project" value="UniProtKB-SubCell"/>
</dbReference>
<dbReference type="GO" id="GO:0009055">
    <property type="term" value="F:electron transfer activity"/>
    <property type="evidence" value="ECO:0007669"/>
    <property type="project" value="TreeGrafter"/>
</dbReference>
<dbReference type="GO" id="GO:0020037">
    <property type="term" value="F:heme binding"/>
    <property type="evidence" value="ECO:0007669"/>
    <property type="project" value="TreeGrafter"/>
</dbReference>
<dbReference type="GO" id="GO:0008940">
    <property type="term" value="F:nitrate reductase activity"/>
    <property type="evidence" value="ECO:0007669"/>
    <property type="project" value="TreeGrafter"/>
</dbReference>
<dbReference type="GO" id="GO:0019645">
    <property type="term" value="P:anaerobic electron transport chain"/>
    <property type="evidence" value="ECO:0007669"/>
    <property type="project" value="TreeGrafter"/>
</dbReference>
<dbReference type="Gene3D" id="1.20.950.20">
    <property type="entry name" value="Transmembrane di-heme cytochromes, Chain C"/>
    <property type="match status" value="1"/>
</dbReference>
<dbReference type="InterPro" id="IPR047660">
    <property type="entry name" value="DsrM"/>
</dbReference>
<dbReference type="InterPro" id="IPR051936">
    <property type="entry name" value="Heme-iron_electron_transfer"/>
</dbReference>
<dbReference type="InterPro" id="IPR023234">
    <property type="entry name" value="NarG-like_domain"/>
</dbReference>
<dbReference type="InterPro" id="IPR036197">
    <property type="entry name" value="NarG-like_sf"/>
</dbReference>
<dbReference type="NCBIfam" id="NF038037">
    <property type="entry name" value="cytob_DsrM"/>
    <property type="match status" value="1"/>
</dbReference>
<dbReference type="PANTHER" id="PTHR30598">
    <property type="entry name" value="NITRATE REDUCTASE PRIVATE CHAPERONE, REDOX ENZYME MATURATION PROTEIN REMP FAMILY"/>
    <property type="match status" value="1"/>
</dbReference>
<dbReference type="PANTHER" id="PTHR30598:SF3">
    <property type="entry name" value="RESPIRATORY NITRATE REDUCTASE 1 GAMMA CHAIN"/>
    <property type="match status" value="1"/>
</dbReference>
<dbReference type="Pfam" id="PF02665">
    <property type="entry name" value="Nitrate_red_gam"/>
    <property type="match status" value="1"/>
</dbReference>
<dbReference type="SUPFAM" id="SSF103501">
    <property type="entry name" value="Respiratory nitrate reductase 1 gamma chain"/>
    <property type="match status" value="1"/>
</dbReference>
<organism>
    <name type="scientific">Archaeoglobus fulgidus (strain ATCC 49558 / DSM 4304 / JCM 9628 / NBRC 100126 / VC-16)</name>
    <dbReference type="NCBI Taxonomy" id="224325"/>
    <lineage>
        <taxon>Archaea</taxon>
        <taxon>Methanobacteriati</taxon>
        <taxon>Methanobacteriota</taxon>
        <taxon>Archaeoglobi</taxon>
        <taxon>Archaeoglobales</taxon>
        <taxon>Archaeoglobaceae</taxon>
        <taxon>Archaeoglobus</taxon>
    </lineage>
</organism>
<evidence type="ECO:0000255" key="1"/>
<evidence type="ECO:0000305" key="2"/>
<protein>
    <recommendedName>
        <fullName>Hdr-like menaquinol oxidoreductase cytochrome b-like subunit</fullName>
        <shortName>Hme subunit C</shortName>
    </recommendedName>
</protein>
<feature type="chain" id="PRO_0000084006" description="Hdr-like menaquinol oxidoreductase cytochrome b-like subunit">
    <location>
        <begin position="1"/>
        <end position="332"/>
    </location>
</feature>
<feature type="transmembrane region" description="Helical" evidence="1">
    <location>
        <begin position="3"/>
        <end position="23"/>
    </location>
</feature>
<feature type="transmembrane region" description="Helical" evidence="1">
    <location>
        <begin position="97"/>
        <end position="117"/>
    </location>
</feature>
<feature type="transmembrane region" description="Helical" evidence="1">
    <location>
        <begin position="143"/>
        <end position="163"/>
    </location>
</feature>
<feature type="transmembrane region" description="Helical" evidence="1">
    <location>
        <begin position="177"/>
        <end position="197"/>
    </location>
</feature>
<feature type="transmembrane region" description="Helical" evidence="1">
    <location>
        <begin position="230"/>
        <end position="250"/>
    </location>
</feature>
<feature type="sequence conflict" description="In Ref. 2; AA sequence." evidence="2" ref="2">
    <original>P</original>
    <variation>F</variation>
    <location>
        <position position="11"/>
    </location>
</feature>
<keyword id="KW-1003">Cell membrane</keyword>
<keyword id="KW-0903">Direct protein sequencing</keyword>
<keyword id="KW-0249">Electron transport</keyword>
<keyword id="KW-0472">Membrane</keyword>
<keyword id="KW-0560">Oxidoreductase</keyword>
<keyword id="KW-1185">Reference proteome</keyword>
<keyword id="KW-0812">Transmembrane</keyword>
<keyword id="KW-1133">Transmembrane helix</keyword>
<keyword id="KW-0813">Transport</keyword>
<comment type="function">
    <text>Has menaquinol-oxidizing activity. HmeC and HmeD subunits may together mediate electron transfer from menaquinol to an unidentified electron acceptor on the cytoplasmic side of the membrane.</text>
</comment>
<comment type="subunit">
    <text>Consists of five subunits: an integral membrane subunit, a cytochrome b-like subunit, a cytochrome c subunit and two iron-sulfur subunits.</text>
</comment>
<comment type="subcellular location">
    <subcellularLocation>
        <location evidence="2">Cell membrane</location>
        <topology evidence="2">Multi-pass membrane protein</topology>
    </subcellularLocation>
</comment>
<sequence>MIGVIFGVIVPYIAVAIFVIGVIYRIVNWANSAVPLKIPTTGGQQKSFPFIKRTIYDRFDSPYTWWETAGRMLLEIFFFRSLLKNTRYYLDRVSQKDARWLWLFGILFHYSLLLVLIRHSRFFLDPVPSFVETLSEIEAFKGVFIPSVYMSGLAIVAALFLLWLRRIFLSRERTLSLPSDHFALILLLAITISGNVMRYFVKADLFAVKELLMSLMTFNIGHAVEVANTIEPIFYVHFALASFLLAYFPFSKLMHAGGVFFSPTRNMPNDNRARRHVNPWDPADVPLLAKGITVAGRVYKSKKLDWDTYYSMYTDQLQEIEEADYKIVPEEL</sequence>
<accession>O29749</accession>
<proteinExistence type="evidence at protein level"/>
<name>HMEC_ARCFU</name>
<reference key="1">
    <citation type="journal article" date="1997" name="Nature">
        <title>The complete genome sequence of the hyperthermophilic, sulphate-reducing archaeon Archaeoglobus fulgidus.</title>
        <authorList>
            <person name="Klenk H.-P."/>
            <person name="Clayton R.A."/>
            <person name="Tomb J.-F."/>
            <person name="White O."/>
            <person name="Nelson K.E."/>
            <person name="Ketchum K.A."/>
            <person name="Dodson R.J."/>
            <person name="Gwinn M.L."/>
            <person name="Hickey E.K."/>
            <person name="Peterson J.D."/>
            <person name="Richardson D.L."/>
            <person name="Kerlavage A.R."/>
            <person name="Graham D.E."/>
            <person name="Kyrpides N.C."/>
            <person name="Fleischmann R.D."/>
            <person name="Quackenbush J."/>
            <person name="Lee N.H."/>
            <person name="Sutton G.G."/>
            <person name="Gill S.R."/>
            <person name="Kirkness E.F."/>
            <person name="Dougherty B.A."/>
            <person name="McKenney K."/>
            <person name="Adams M.D."/>
            <person name="Loftus B.J."/>
            <person name="Peterson S.N."/>
            <person name="Reich C.I."/>
            <person name="McNeil L.K."/>
            <person name="Badger J.H."/>
            <person name="Glodek A."/>
            <person name="Zhou L."/>
            <person name="Overbeek R."/>
            <person name="Gocayne J.D."/>
            <person name="Weidman J.F."/>
            <person name="McDonald L.A."/>
            <person name="Utterback T.R."/>
            <person name="Cotton M.D."/>
            <person name="Spriggs T."/>
            <person name="Artiach P."/>
            <person name="Kaine B.P."/>
            <person name="Sykes S.M."/>
            <person name="Sadow P.W."/>
            <person name="D'Andrea K.P."/>
            <person name="Bowman C."/>
            <person name="Fujii C."/>
            <person name="Garland S.A."/>
            <person name="Mason T.M."/>
            <person name="Olsen G.J."/>
            <person name="Fraser C.M."/>
            <person name="Smith H.O."/>
            <person name="Woese C.R."/>
            <person name="Venter J.C."/>
        </authorList>
    </citation>
    <scope>NUCLEOTIDE SEQUENCE [LARGE SCALE GENOMIC DNA]</scope>
    <source>
        <strain>ATCC 49558 / DSM 4304 / JCM 9628 / NBRC 100126 / VC-16</strain>
    </source>
</reference>
<reference key="2">
    <citation type="journal article" date="2002" name="Eur. J. Biochem.">
        <title>Purification and characterization of a membrane-bound enzyme complex from the sulfate-reducing archaeon Archaeoglobus fulgidus related to heterodisulfide reductase from methanogenic archaea.</title>
        <authorList>
            <person name="Mander G.J."/>
            <person name="Duin E.C."/>
            <person name="Linder D."/>
            <person name="Stetter K.O."/>
            <person name="Hedderich R."/>
        </authorList>
    </citation>
    <scope>PROTEIN SEQUENCE OF 1-15</scope>
    <source>
        <strain>ATCC 49558 / DSM 4304 / JCM 9628 / NBRC 100126 / VC-16</strain>
    </source>
</reference>
<gene>
    <name type="primary">hmeC</name>
    <name type="ordered locus">AF_0501</name>
</gene>